<accession>B4EYV7</accession>
<gene>
    <name evidence="1" type="primary">fusA</name>
    <name type="ordered locus">PMI2793</name>
</gene>
<evidence type="ECO:0000255" key="1">
    <source>
        <dbReference type="HAMAP-Rule" id="MF_00054"/>
    </source>
</evidence>
<reference key="1">
    <citation type="journal article" date="2008" name="J. Bacteriol.">
        <title>Complete genome sequence of uropathogenic Proteus mirabilis, a master of both adherence and motility.</title>
        <authorList>
            <person name="Pearson M.M."/>
            <person name="Sebaihia M."/>
            <person name="Churcher C."/>
            <person name="Quail M.A."/>
            <person name="Seshasayee A.S."/>
            <person name="Luscombe N.M."/>
            <person name="Abdellah Z."/>
            <person name="Arrosmith C."/>
            <person name="Atkin B."/>
            <person name="Chillingworth T."/>
            <person name="Hauser H."/>
            <person name="Jagels K."/>
            <person name="Moule S."/>
            <person name="Mungall K."/>
            <person name="Norbertczak H."/>
            <person name="Rabbinowitsch E."/>
            <person name="Walker D."/>
            <person name="Whithead S."/>
            <person name="Thomson N.R."/>
            <person name="Rather P.N."/>
            <person name="Parkhill J."/>
            <person name="Mobley H.L.T."/>
        </authorList>
    </citation>
    <scope>NUCLEOTIDE SEQUENCE [LARGE SCALE GENOMIC DNA]</scope>
    <source>
        <strain>HI4320</strain>
    </source>
</reference>
<organism>
    <name type="scientific">Proteus mirabilis (strain HI4320)</name>
    <dbReference type="NCBI Taxonomy" id="529507"/>
    <lineage>
        <taxon>Bacteria</taxon>
        <taxon>Pseudomonadati</taxon>
        <taxon>Pseudomonadota</taxon>
        <taxon>Gammaproteobacteria</taxon>
        <taxon>Enterobacterales</taxon>
        <taxon>Morganellaceae</taxon>
        <taxon>Proteus</taxon>
    </lineage>
</organism>
<keyword id="KW-0963">Cytoplasm</keyword>
<keyword id="KW-0251">Elongation factor</keyword>
<keyword id="KW-0342">GTP-binding</keyword>
<keyword id="KW-0547">Nucleotide-binding</keyword>
<keyword id="KW-0648">Protein biosynthesis</keyword>
<keyword id="KW-1185">Reference proteome</keyword>
<sequence length="704" mass="77885">MARQTPIARYRNIGISAHIDAGKTTTSERILFYTGVNHKIGETHEGSATMDWMEQEQERGITITSAATTAFWSGMAKQFEPHRVNIIDTPGHVDFTIEVERSMRVLDGAVMVYCAVGGVQPQSETVWRQANKYHVPRIAFVNKMDRMGANFLRVVEQIKTRLAANPVPLQIPVGAEEDFTGVVDLIKMKAIRWNEEDQGVTFEYEDIPADLQDLAEEWHNNLIESAAEASEDLMDKYLGGEELSEAEIKSALRKRVLDNEIILVTCGSAFKNKGVQAMLDAVIEYLPAPTDVPAIKGILPDGKDTPAERHSSDEEPFSALAFKIATDPFVGNLTFFRVYSGVVNSGDTVLNPVKDKKERFGRIVQMHANKREEIKEVRAGDIAAAIGLKDVTTGDTLCAIDAPIILERMEFPEPVISVAIEPKTKADQEKMGIALNRLAQEDPSFRVSSDEESGQTIIAGMGELHLDVLVDRMRREFKVEANVGKPQVAYRETIREEITDVEGKHAKQSGGRGQYGHVVIDLSPLPSGGEENYVFVNDIVGGVIPKEFIPAVDKGIQEQLKSGPLAGYPVVDIKARLHFGSYHDVDSSEIAFKIAASMAFKEGFMKAKPILLEPIMKVEIETPEDYMGDVIGDLNRRRGMVEGMDDLPTGKIIRAQVPLAEMFGYATDLRSQTQGRASYSMEFLKYNEAPSNVAQAIIEARKAK</sequence>
<comment type="function">
    <text evidence="1">Catalyzes the GTP-dependent ribosomal translocation step during translation elongation. During this step, the ribosome changes from the pre-translocational (PRE) to the post-translocational (POST) state as the newly formed A-site-bound peptidyl-tRNA and P-site-bound deacylated tRNA move to the P and E sites, respectively. Catalyzes the coordinated movement of the two tRNA molecules, the mRNA and conformational changes in the ribosome.</text>
</comment>
<comment type="subcellular location">
    <subcellularLocation>
        <location evidence="1">Cytoplasm</location>
    </subcellularLocation>
</comment>
<comment type="similarity">
    <text evidence="1">Belongs to the TRAFAC class translation factor GTPase superfamily. Classic translation factor GTPase family. EF-G/EF-2 subfamily.</text>
</comment>
<feature type="chain" id="PRO_1000091750" description="Elongation factor G">
    <location>
        <begin position="1"/>
        <end position="704"/>
    </location>
</feature>
<feature type="domain" description="tr-type G">
    <location>
        <begin position="8"/>
        <end position="290"/>
    </location>
</feature>
<feature type="binding site" evidence="1">
    <location>
        <begin position="17"/>
        <end position="24"/>
    </location>
    <ligand>
        <name>GTP</name>
        <dbReference type="ChEBI" id="CHEBI:37565"/>
    </ligand>
</feature>
<feature type="binding site" evidence="1">
    <location>
        <begin position="88"/>
        <end position="92"/>
    </location>
    <ligand>
        <name>GTP</name>
        <dbReference type="ChEBI" id="CHEBI:37565"/>
    </ligand>
</feature>
<feature type="binding site" evidence="1">
    <location>
        <begin position="142"/>
        <end position="145"/>
    </location>
    <ligand>
        <name>GTP</name>
        <dbReference type="ChEBI" id="CHEBI:37565"/>
    </ligand>
</feature>
<dbReference type="EMBL" id="AM942759">
    <property type="protein sequence ID" value="CAR45508.1"/>
    <property type="molecule type" value="Genomic_DNA"/>
</dbReference>
<dbReference type="RefSeq" id="WP_012368509.1">
    <property type="nucleotide sequence ID" value="NC_010554.1"/>
</dbReference>
<dbReference type="SMR" id="B4EYV7"/>
<dbReference type="EnsemblBacteria" id="CAR45508">
    <property type="protein sequence ID" value="CAR45508"/>
    <property type="gene ID" value="PMI2793"/>
</dbReference>
<dbReference type="GeneID" id="6800570"/>
<dbReference type="KEGG" id="pmr:PMI2793"/>
<dbReference type="eggNOG" id="COG0480">
    <property type="taxonomic scope" value="Bacteria"/>
</dbReference>
<dbReference type="HOGENOM" id="CLU_002794_4_1_6"/>
<dbReference type="Proteomes" id="UP000008319">
    <property type="component" value="Chromosome"/>
</dbReference>
<dbReference type="GO" id="GO:0005737">
    <property type="term" value="C:cytoplasm"/>
    <property type="evidence" value="ECO:0007669"/>
    <property type="project" value="UniProtKB-SubCell"/>
</dbReference>
<dbReference type="GO" id="GO:0005525">
    <property type="term" value="F:GTP binding"/>
    <property type="evidence" value="ECO:0007669"/>
    <property type="project" value="UniProtKB-UniRule"/>
</dbReference>
<dbReference type="GO" id="GO:0003924">
    <property type="term" value="F:GTPase activity"/>
    <property type="evidence" value="ECO:0007669"/>
    <property type="project" value="InterPro"/>
</dbReference>
<dbReference type="GO" id="GO:0097216">
    <property type="term" value="F:guanosine tetraphosphate binding"/>
    <property type="evidence" value="ECO:0007669"/>
    <property type="project" value="UniProtKB-ARBA"/>
</dbReference>
<dbReference type="GO" id="GO:0003746">
    <property type="term" value="F:translation elongation factor activity"/>
    <property type="evidence" value="ECO:0007669"/>
    <property type="project" value="UniProtKB-UniRule"/>
</dbReference>
<dbReference type="GO" id="GO:0032790">
    <property type="term" value="P:ribosome disassembly"/>
    <property type="evidence" value="ECO:0007669"/>
    <property type="project" value="TreeGrafter"/>
</dbReference>
<dbReference type="CDD" id="cd01886">
    <property type="entry name" value="EF-G"/>
    <property type="match status" value="1"/>
</dbReference>
<dbReference type="CDD" id="cd16262">
    <property type="entry name" value="EFG_III"/>
    <property type="match status" value="1"/>
</dbReference>
<dbReference type="CDD" id="cd01434">
    <property type="entry name" value="EFG_mtEFG1_IV"/>
    <property type="match status" value="1"/>
</dbReference>
<dbReference type="CDD" id="cd03713">
    <property type="entry name" value="EFG_mtEFG_C"/>
    <property type="match status" value="1"/>
</dbReference>
<dbReference type="CDD" id="cd04088">
    <property type="entry name" value="EFG_mtEFG_II"/>
    <property type="match status" value="1"/>
</dbReference>
<dbReference type="FunFam" id="2.40.30.10:FF:000006">
    <property type="entry name" value="Elongation factor G"/>
    <property type="match status" value="1"/>
</dbReference>
<dbReference type="FunFam" id="3.30.230.10:FF:000003">
    <property type="entry name" value="Elongation factor G"/>
    <property type="match status" value="1"/>
</dbReference>
<dbReference type="FunFam" id="3.30.70.240:FF:000001">
    <property type="entry name" value="Elongation factor G"/>
    <property type="match status" value="1"/>
</dbReference>
<dbReference type="FunFam" id="3.30.70.870:FF:000001">
    <property type="entry name" value="Elongation factor G"/>
    <property type="match status" value="1"/>
</dbReference>
<dbReference type="FunFam" id="3.40.50.300:FF:000029">
    <property type="entry name" value="Elongation factor G"/>
    <property type="match status" value="1"/>
</dbReference>
<dbReference type="Gene3D" id="3.30.230.10">
    <property type="match status" value="1"/>
</dbReference>
<dbReference type="Gene3D" id="3.30.70.240">
    <property type="match status" value="1"/>
</dbReference>
<dbReference type="Gene3D" id="3.30.70.870">
    <property type="entry name" value="Elongation Factor G (Translational Gtpase), domain 3"/>
    <property type="match status" value="1"/>
</dbReference>
<dbReference type="Gene3D" id="3.40.50.300">
    <property type="entry name" value="P-loop containing nucleotide triphosphate hydrolases"/>
    <property type="match status" value="1"/>
</dbReference>
<dbReference type="Gene3D" id="2.40.30.10">
    <property type="entry name" value="Translation factors"/>
    <property type="match status" value="1"/>
</dbReference>
<dbReference type="HAMAP" id="MF_00054_B">
    <property type="entry name" value="EF_G_EF_2_B"/>
    <property type="match status" value="1"/>
</dbReference>
<dbReference type="InterPro" id="IPR041095">
    <property type="entry name" value="EFG_II"/>
</dbReference>
<dbReference type="InterPro" id="IPR009022">
    <property type="entry name" value="EFG_III"/>
</dbReference>
<dbReference type="InterPro" id="IPR035647">
    <property type="entry name" value="EFG_III/V"/>
</dbReference>
<dbReference type="InterPro" id="IPR047872">
    <property type="entry name" value="EFG_IV"/>
</dbReference>
<dbReference type="InterPro" id="IPR035649">
    <property type="entry name" value="EFG_V"/>
</dbReference>
<dbReference type="InterPro" id="IPR000640">
    <property type="entry name" value="EFG_V-like"/>
</dbReference>
<dbReference type="InterPro" id="IPR004161">
    <property type="entry name" value="EFTu-like_2"/>
</dbReference>
<dbReference type="InterPro" id="IPR031157">
    <property type="entry name" value="G_TR_CS"/>
</dbReference>
<dbReference type="InterPro" id="IPR027417">
    <property type="entry name" value="P-loop_NTPase"/>
</dbReference>
<dbReference type="InterPro" id="IPR020568">
    <property type="entry name" value="Ribosomal_Su5_D2-typ_SF"/>
</dbReference>
<dbReference type="InterPro" id="IPR014721">
    <property type="entry name" value="Ribsml_uS5_D2-typ_fold_subgr"/>
</dbReference>
<dbReference type="InterPro" id="IPR005225">
    <property type="entry name" value="Small_GTP-bd"/>
</dbReference>
<dbReference type="InterPro" id="IPR000795">
    <property type="entry name" value="T_Tr_GTP-bd_dom"/>
</dbReference>
<dbReference type="InterPro" id="IPR009000">
    <property type="entry name" value="Transl_B-barrel_sf"/>
</dbReference>
<dbReference type="InterPro" id="IPR004540">
    <property type="entry name" value="Transl_elong_EFG/EF2"/>
</dbReference>
<dbReference type="InterPro" id="IPR005517">
    <property type="entry name" value="Transl_elong_EFG/EF2_IV"/>
</dbReference>
<dbReference type="NCBIfam" id="TIGR00484">
    <property type="entry name" value="EF-G"/>
    <property type="match status" value="1"/>
</dbReference>
<dbReference type="NCBIfam" id="NF009381">
    <property type="entry name" value="PRK12740.1-5"/>
    <property type="match status" value="1"/>
</dbReference>
<dbReference type="NCBIfam" id="TIGR00231">
    <property type="entry name" value="small_GTP"/>
    <property type="match status" value="1"/>
</dbReference>
<dbReference type="PANTHER" id="PTHR43261:SF1">
    <property type="entry name" value="RIBOSOME-RELEASING FACTOR 2, MITOCHONDRIAL"/>
    <property type="match status" value="1"/>
</dbReference>
<dbReference type="PANTHER" id="PTHR43261">
    <property type="entry name" value="TRANSLATION ELONGATION FACTOR G-RELATED"/>
    <property type="match status" value="1"/>
</dbReference>
<dbReference type="Pfam" id="PF00679">
    <property type="entry name" value="EFG_C"/>
    <property type="match status" value="1"/>
</dbReference>
<dbReference type="Pfam" id="PF14492">
    <property type="entry name" value="EFG_III"/>
    <property type="match status" value="1"/>
</dbReference>
<dbReference type="Pfam" id="PF03764">
    <property type="entry name" value="EFG_IV"/>
    <property type="match status" value="1"/>
</dbReference>
<dbReference type="Pfam" id="PF00009">
    <property type="entry name" value="GTP_EFTU"/>
    <property type="match status" value="1"/>
</dbReference>
<dbReference type="Pfam" id="PF03144">
    <property type="entry name" value="GTP_EFTU_D2"/>
    <property type="match status" value="1"/>
</dbReference>
<dbReference type="PRINTS" id="PR00315">
    <property type="entry name" value="ELONGATNFCT"/>
</dbReference>
<dbReference type="SMART" id="SM00838">
    <property type="entry name" value="EFG_C"/>
    <property type="match status" value="1"/>
</dbReference>
<dbReference type="SMART" id="SM00889">
    <property type="entry name" value="EFG_IV"/>
    <property type="match status" value="1"/>
</dbReference>
<dbReference type="SUPFAM" id="SSF54980">
    <property type="entry name" value="EF-G C-terminal domain-like"/>
    <property type="match status" value="2"/>
</dbReference>
<dbReference type="SUPFAM" id="SSF52540">
    <property type="entry name" value="P-loop containing nucleoside triphosphate hydrolases"/>
    <property type="match status" value="1"/>
</dbReference>
<dbReference type="SUPFAM" id="SSF54211">
    <property type="entry name" value="Ribosomal protein S5 domain 2-like"/>
    <property type="match status" value="1"/>
</dbReference>
<dbReference type="SUPFAM" id="SSF50447">
    <property type="entry name" value="Translation proteins"/>
    <property type="match status" value="1"/>
</dbReference>
<dbReference type="PROSITE" id="PS00301">
    <property type="entry name" value="G_TR_1"/>
    <property type="match status" value="1"/>
</dbReference>
<dbReference type="PROSITE" id="PS51722">
    <property type="entry name" value="G_TR_2"/>
    <property type="match status" value="1"/>
</dbReference>
<proteinExistence type="inferred from homology"/>
<name>EFG_PROMH</name>
<protein>
    <recommendedName>
        <fullName evidence="1">Elongation factor G</fullName>
        <shortName evidence="1">EF-G</shortName>
    </recommendedName>
</protein>